<reference key="1">
    <citation type="journal article" date="2010" name="Appl. Environ. Microbiol.">
        <title>Conserved symbiotic plasmid DNA sequences in the multireplicon pangenomic structure of Rhizobium etli.</title>
        <authorList>
            <person name="Gonzalez V."/>
            <person name="Acosta J.L."/>
            <person name="Santamaria R.I."/>
            <person name="Bustos P."/>
            <person name="Fernandez J.L."/>
            <person name="Hernandez Gonzalez I.L."/>
            <person name="Diaz R."/>
            <person name="Flores M."/>
            <person name="Palacios R."/>
            <person name="Mora J."/>
            <person name="Davila G."/>
        </authorList>
    </citation>
    <scope>NUCLEOTIDE SEQUENCE [LARGE SCALE GENOMIC DNA]</scope>
    <source>
        <strain>CIAT 652</strain>
    </source>
</reference>
<protein>
    <recommendedName>
        <fullName evidence="1">4-hydroxy-3-methylbut-2-en-1-yl diphosphate synthase (flavodoxin)</fullName>
        <ecNumber evidence="1">1.17.7.3</ecNumber>
    </recommendedName>
    <alternativeName>
        <fullName evidence="1">1-hydroxy-2-methyl-2-(E)-butenyl 4-diphosphate synthase</fullName>
    </alternativeName>
</protein>
<accession>B3PR71</accession>
<dbReference type="EC" id="1.17.7.3" evidence="1"/>
<dbReference type="EMBL" id="CP001074">
    <property type="protein sequence ID" value="ACE93225.1"/>
    <property type="molecule type" value="Genomic_DNA"/>
</dbReference>
<dbReference type="SMR" id="B3PR71"/>
<dbReference type="KEGG" id="rec:RHECIAT_CH0004297"/>
<dbReference type="eggNOG" id="COG0821">
    <property type="taxonomic scope" value="Bacteria"/>
</dbReference>
<dbReference type="HOGENOM" id="CLU_042258_1_0_5"/>
<dbReference type="UniPathway" id="UPA00056">
    <property type="reaction ID" value="UER00096"/>
</dbReference>
<dbReference type="Proteomes" id="UP000008817">
    <property type="component" value="Chromosome"/>
</dbReference>
<dbReference type="GO" id="GO:0051539">
    <property type="term" value="F:4 iron, 4 sulfur cluster binding"/>
    <property type="evidence" value="ECO:0007669"/>
    <property type="project" value="UniProtKB-UniRule"/>
</dbReference>
<dbReference type="GO" id="GO:0046429">
    <property type="term" value="F:4-hydroxy-3-methylbut-2-en-1-yl diphosphate synthase activity (ferredoxin)"/>
    <property type="evidence" value="ECO:0007669"/>
    <property type="project" value="UniProtKB-UniRule"/>
</dbReference>
<dbReference type="GO" id="GO:0141197">
    <property type="term" value="F:4-hydroxy-3-methylbut-2-enyl-diphosphate synthase activity (flavodoxin)"/>
    <property type="evidence" value="ECO:0007669"/>
    <property type="project" value="UniProtKB-EC"/>
</dbReference>
<dbReference type="GO" id="GO:0005506">
    <property type="term" value="F:iron ion binding"/>
    <property type="evidence" value="ECO:0007669"/>
    <property type="project" value="InterPro"/>
</dbReference>
<dbReference type="GO" id="GO:0019288">
    <property type="term" value="P:isopentenyl diphosphate biosynthetic process, methylerythritol 4-phosphate pathway"/>
    <property type="evidence" value="ECO:0007669"/>
    <property type="project" value="UniProtKB-UniRule"/>
</dbReference>
<dbReference type="GO" id="GO:0016114">
    <property type="term" value="P:terpenoid biosynthetic process"/>
    <property type="evidence" value="ECO:0007669"/>
    <property type="project" value="InterPro"/>
</dbReference>
<dbReference type="FunFam" id="3.30.413.10:FF:000012">
    <property type="entry name" value="4-hydroxy-3-methylbut-2-en-1-yl diphosphate synthase (flavodoxin)"/>
    <property type="match status" value="1"/>
</dbReference>
<dbReference type="Gene3D" id="3.20.20.20">
    <property type="entry name" value="Dihydropteroate synthase-like"/>
    <property type="match status" value="1"/>
</dbReference>
<dbReference type="Gene3D" id="3.30.413.10">
    <property type="entry name" value="Sulfite Reductase Hemoprotein, domain 1"/>
    <property type="match status" value="1"/>
</dbReference>
<dbReference type="HAMAP" id="MF_00159">
    <property type="entry name" value="IspG"/>
    <property type="match status" value="1"/>
</dbReference>
<dbReference type="InterPro" id="IPR011005">
    <property type="entry name" value="Dihydropteroate_synth-like_sf"/>
</dbReference>
<dbReference type="InterPro" id="IPR016425">
    <property type="entry name" value="IspG_bac"/>
</dbReference>
<dbReference type="InterPro" id="IPR004588">
    <property type="entry name" value="IspG_bac-typ"/>
</dbReference>
<dbReference type="InterPro" id="IPR045854">
    <property type="entry name" value="NO2/SO3_Rdtase_4Fe4S_sf"/>
</dbReference>
<dbReference type="NCBIfam" id="TIGR00612">
    <property type="entry name" value="ispG_gcpE"/>
    <property type="match status" value="1"/>
</dbReference>
<dbReference type="NCBIfam" id="NF001540">
    <property type="entry name" value="PRK00366.1"/>
    <property type="match status" value="1"/>
</dbReference>
<dbReference type="PANTHER" id="PTHR30454">
    <property type="entry name" value="4-HYDROXY-3-METHYLBUT-2-EN-1-YL DIPHOSPHATE SYNTHASE"/>
    <property type="match status" value="1"/>
</dbReference>
<dbReference type="PANTHER" id="PTHR30454:SF0">
    <property type="entry name" value="4-HYDROXY-3-METHYLBUT-2-EN-1-YL DIPHOSPHATE SYNTHASE (FERREDOXIN), CHLOROPLASTIC"/>
    <property type="match status" value="1"/>
</dbReference>
<dbReference type="Pfam" id="PF04551">
    <property type="entry name" value="GcpE"/>
    <property type="match status" value="1"/>
</dbReference>
<dbReference type="PIRSF" id="PIRSF004640">
    <property type="entry name" value="IspG"/>
    <property type="match status" value="1"/>
</dbReference>
<dbReference type="SUPFAM" id="SSF56014">
    <property type="entry name" value="Nitrite and sulphite reductase 4Fe-4S domain-like"/>
    <property type="match status" value="1"/>
</dbReference>
<proteinExistence type="inferred from homology"/>
<feature type="chain" id="PRO_1000097175" description="4-hydroxy-3-methylbut-2-en-1-yl diphosphate synthase (flavodoxin)">
    <location>
        <begin position="1"/>
        <end position="416"/>
    </location>
</feature>
<feature type="binding site" evidence="1">
    <location>
        <position position="304"/>
    </location>
    <ligand>
        <name>[4Fe-4S] cluster</name>
        <dbReference type="ChEBI" id="CHEBI:49883"/>
    </ligand>
</feature>
<feature type="binding site" evidence="1">
    <location>
        <position position="307"/>
    </location>
    <ligand>
        <name>[4Fe-4S] cluster</name>
        <dbReference type="ChEBI" id="CHEBI:49883"/>
    </ligand>
</feature>
<feature type="binding site" evidence="1">
    <location>
        <position position="350"/>
    </location>
    <ligand>
        <name>[4Fe-4S] cluster</name>
        <dbReference type="ChEBI" id="CHEBI:49883"/>
    </ligand>
</feature>
<feature type="binding site" evidence="1">
    <location>
        <position position="357"/>
    </location>
    <ligand>
        <name>[4Fe-4S] cluster</name>
        <dbReference type="ChEBI" id="CHEBI:49883"/>
    </ligand>
</feature>
<keyword id="KW-0004">4Fe-4S</keyword>
<keyword id="KW-0408">Iron</keyword>
<keyword id="KW-0411">Iron-sulfur</keyword>
<keyword id="KW-0414">Isoprene biosynthesis</keyword>
<keyword id="KW-0479">Metal-binding</keyword>
<keyword id="KW-0560">Oxidoreductase</keyword>
<name>ISPG_RHIE6</name>
<evidence type="ECO:0000255" key="1">
    <source>
        <dbReference type="HAMAP-Rule" id="MF_00159"/>
    </source>
</evidence>
<comment type="function">
    <text evidence="1">Converts 2C-methyl-D-erythritol 2,4-cyclodiphosphate (ME-2,4cPP) into 1-hydroxy-2-methyl-2-(E)-butenyl 4-diphosphate.</text>
</comment>
<comment type="catalytic activity">
    <reaction evidence="1">
        <text>(2E)-4-hydroxy-3-methylbut-2-enyl diphosphate + oxidized [flavodoxin] + H2O + 2 H(+) = 2-C-methyl-D-erythritol 2,4-cyclic diphosphate + reduced [flavodoxin]</text>
        <dbReference type="Rhea" id="RHEA:43604"/>
        <dbReference type="Rhea" id="RHEA-COMP:10622"/>
        <dbReference type="Rhea" id="RHEA-COMP:10623"/>
        <dbReference type="ChEBI" id="CHEBI:15377"/>
        <dbReference type="ChEBI" id="CHEBI:15378"/>
        <dbReference type="ChEBI" id="CHEBI:57618"/>
        <dbReference type="ChEBI" id="CHEBI:58210"/>
        <dbReference type="ChEBI" id="CHEBI:58483"/>
        <dbReference type="ChEBI" id="CHEBI:128753"/>
        <dbReference type="EC" id="1.17.7.3"/>
    </reaction>
</comment>
<comment type="cofactor">
    <cofactor evidence="1">
        <name>[4Fe-4S] cluster</name>
        <dbReference type="ChEBI" id="CHEBI:49883"/>
    </cofactor>
    <text evidence="1">Binds 1 [4Fe-4S] cluster.</text>
</comment>
<comment type="pathway">
    <text evidence="1">Isoprenoid biosynthesis; isopentenyl diphosphate biosynthesis via DXP pathway; isopentenyl diphosphate from 1-deoxy-D-xylulose 5-phosphate: step 5/6.</text>
</comment>
<comment type="similarity">
    <text evidence="1">Belongs to the IspG family.</text>
</comment>
<organism>
    <name type="scientific">Rhizobium etli (strain CIAT 652)</name>
    <dbReference type="NCBI Taxonomy" id="491916"/>
    <lineage>
        <taxon>Bacteria</taxon>
        <taxon>Pseudomonadati</taxon>
        <taxon>Pseudomonadota</taxon>
        <taxon>Alphaproteobacteria</taxon>
        <taxon>Hyphomicrobiales</taxon>
        <taxon>Rhizobiaceae</taxon>
        <taxon>Rhizobium/Agrobacterium group</taxon>
        <taxon>Rhizobium</taxon>
    </lineage>
</organism>
<sequence>MSSAADFDPKPRRASIAVDVGGVIVGGGAPIVVQSMTNTDTADIDSTVAQVAALHRAGSELVRITVDRDESAAAVPKIRERLLRLGMDVPLIGDFHYIGHKLLADHPDCAAALAKYRINPGNVGFKDKKDKQFAEIIEMAIRYDKPVRIGVNWGSLDQDLLTALMDQNAAAGSPLSARQVTREAIVQSALLSAALAEEIGLPRNRIILSAKVSQVQDLIAVNSMLAERSNHALHLGLTEAGMGSKGIVASAAAMGFVLQHGIGDTIRVSLTPEPNGDRTREVQVAQEILQVMGFRQFVPVVAACPGCGRTTSTVFQELAQNIQNDIRKNMPVWREKYPGVEALNVAVMGCIVNGPGESKHADIGISLPGTGETPAAPVFIDGKKALTLRGPNIAADFEALVVDYIEKRFGQRTAAE</sequence>
<gene>
    <name evidence="1" type="primary">ispG</name>
    <name type="ordered locus">RHECIAT_CH0004297</name>
</gene>